<feature type="chain" id="PRO_0000334418" description="Na(+)/H(+) antiporter NhaA">
    <location>
        <begin position="1"/>
        <end position="388"/>
    </location>
</feature>
<feature type="transmembrane region" description="Helical" evidence="1">
    <location>
        <begin position="13"/>
        <end position="33"/>
    </location>
</feature>
<feature type="transmembrane region" description="Helical" evidence="1">
    <location>
        <begin position="36"/>
        <end position="56"/>
    </location>
</feature>
<feature type="transmembrane region" description="Helical" evidence="1">
    <location>
        <begin position="59"/>
        <end position="79"/>
    </location>
</feature>
<feature type="transmembrane region" description="Helical" evidence="1">
    <location>
        <begin position="95"/>
        <end position="115"/>
    </location>
</feature>
<feature type="transmembrane region" description="Helical" evidence="1">
    <location>
        <begin position="125"/>
        <end position="145"/>
    </location>
</feature>
<feature type="transmembrane region" description="Helical" evidence="1">
    <location>
        <begin position="154"/>
        <end position="174"/>
    </location>
</feature>
<feature type="transmembrane region" description="Helical" evidence="1">
    <location>
        <begin position="179"/>
        <end position="199"/>
    </location>
</feature>
<feature type="transmembrane region" description="Helical" evidence="1">
    <location>
        <begin position="213"/>
        <end position="233"/>
    </location>
</feature>
<feature type="transmembrane region" description="Helical" evidence="1">
    <location>
        <begin position="259"/>
        <end position="279"/>
    </location>
</feature>
<feature type="transmembrane region" description="Helical" evidence="1">
    <location>
        <begin position="287"/>
        <end position="307"/>
    </location>
</feature>
<feature type="transmembrane region" description="Helical" evidence="1">
    <location>
        <begin position="328"/>
        <end position="348"/>
    </location>
</feature>
<feature type="transmembrane region" description="Helical" evidence="1">
    <location>
        <begin position="363"/>
        <end position="383"/>
    </location>
</feature>
<dbReference type="EMBL" id="CP000826">
    <property type="protein sequence ID" value="ABV39800.1"/>
    <property type="status" value="ALT_INIT"/>
    <property type="molecule type" value="Genomic_DNA"/>
</dbReference>
<dbReference type="SMR" id="A8G9L0"/>
<dbReference type="STRING" id="399741.Spro_0694"/>
<dbReference type="KEGG" id="spe:Spro_0694"/>
<dbReference type="eggNOG" id="COG3004">
    <property type="taxonomic scope" value="Bacteria"/>
</dbReference>
<dbReference type="HOGENOM" id="CLU_015803_1_0_6"/>
<dbReference type="OrthoDB" id="9808135at2"/>
<dbReference type="GO" id="GO:0005886">
    <property type="term" value="C:plasma membrane"/>
    <property type="evidence" value="ECO:0007669"/>
    <property type="project" value="UniProtKB-SubCell"/>
</dbReference>
<dbReference type="GO" id="GO:0015385">
    <property type="term" value="F:sodium:proton antiporter activity"/>
    <property type="evidence" value="ECO:0007669"/>
    <property type="project" value="TreeGrafter"/>
</dbReference>
<dbReference type="GO" id="GO:0006885">
    <property type="term" value="P:regulation of pH"/>
    <property type="evidence" value="ECO:0007669"/>
    <property type="project" value="InterPro"/>
</dbReference>
<dbReference type="Gene3D" id="1.20.1530.10">
    <property type="entry name" value="Na+/H+ antiporter like domain"/>
    <property type="match status" value="1"/>
</dbReference>
<dbReference type="HAMAP" id="MF_01844">
    <property type="entry name" value="NhaA"/>
    <property type="match status" value="1"/>
</dbReference>
<dbReference type="InterPro" id="IPR023171">
    <property type="entry name" value="Na/H_antiporter_dom_sf"/>
</dbReference>
<dbReference type="InterPro" id="IPR004670">
    <property type="entry name" value="NhaA"/>
</dbReference>
<dbReference type="NCBIfam" id="TIGR00773">
    <property type="entry name" value="NhaA"/>
    <property type="match status" value="1"/>
</dbReference>
<dbReference type="NCBIfam" id="NF007111">
    <property type="entry name" value="PRK09560.1"/>
    <property type="match status" value="1"/>
</dbReference>
<dbReference type="NCBIfam" id="NF007112">
    <property type="entry name" value="PRK09561.1"/>
    <property type="match status" value="1"/>
</dbReference>
<dbReference type="PANTHER" id="PTHR30341:SF0">
    <property type="entry name" value="NA(+)_H(+) ANTIPORTER NHAA"/>
    <property type="match status" value="1"/>
</dbReference>
<dbReference type="PANTHER" id="PTHR30341">
    <property type="entry name" value="SODIUM ION/PROTON ANTIPORTER NHAA-RELATED"/>
    <property type="match status" value="1"/>
</dbReference>
<dbReference type="Pfam" id="PF06965">
    <property type="entry name" value="Na_H_antiport_1"/>
    <property type="match status" value="1"/>
</dbReference>
<comment type="function">
    <text evidence="1">Na(+)/H(+) antiporter that extrudes sodium in exchange for external protons.</text>
</comment>
<comment type="catalytic activity">
    <reaction evidence="1">
        <text>Na(+)(in) + 2 H(+)(out) = Na(+)(out) + 2 H(+)(in)</text>
        <dbReference type="Rhea" id="RHEA:29251"/>
        <dbReference type="ChEBI" id="CHEBI:15378"/>
        <dbReference type="ChEBI" id="CHEBI:29101"/>
    </reaction>
    <physiologicalReaction direction="left-to-right" evidence="1">
        <dbReference type="Rhea" id="RHEA:29252"/>
    </physiologicalReaction>
</comment>
<comment type="subcellular location">
    <subcellularLocation>
        <location evidence="1">Cell inner membrane</location>
        <topology evidence="1">Multi-pass membrane protein</topology>
    </subcellularLocation>
</comment>
<comment type="similarity">
    <text evidence="1">Belongs to the NhaA Na(+)/H(+) (TC 2.A.33) antiporter family.</text>
</comment>
<comment type="sequence caution" evidence="2">
    <conflict type="erroneous initiation">
        <sequence resource="EMBL-CDS" id="ABV39800"/>
    </conflict>
</comment>
<name>NHAA_SERP5</name>
<protein>
    <recommendedName>
        <fullName evidence="1">Na(+)/H(+) antiporter NhaA</fullName>
    </recommendedName>
    <alternativeName>
        <fullName evidence="1">Sodium/proton antiporter NhaA</fullName>
    </alternativeName>
</protein>
<keyword id="KW-0050">Antiport</keyword>
<keyword id="KW-0997">Cell inner membrane</keyword>
<keyword id="KW-1003">Cell membrane</keyword>
<keyword id="KW-0406">Ion transport</keyword>
<keyword id="KW-0472">Membrane</keyword>
<keyword id="KW-0915">Sodium</keyword>
<keyword id="KW-0739">Sodium transport</keyword>
<keyword id="KW-0812">Transmembrane</keyword>
<keyword id="KW-1133">Transmembrane helix</keyword>
<keyword id="KW-0813">Transport</keyword>
<accession>A8G9L0</accession>
<reference key="1">
    <citation type="submission" date="2007-09" db="EMBL/GenBank/DDBJ databases">
        <title>Complete sequence of chromosome of Serratia proteamaculans 568.</title>
        <authorList>
            <consortium name="US DOE Joint Genome Institute"/>
            <person name="Copeland A."/>
            <person name="Lucas S."/>
            <person name="Lapidus A."/>
            <person name="Barry K."/>
            <person name="Glavina del Rio T."/>
            <person name="Dalin E."/>
            <person name="Tice H."/>
            <person name="Pitluck S."/>
            <person name="Chain P."/>
            <person name="Malfatti S."/>
            <person name="Shin M."/>
            <person name="Vergez L."/>
            <person name="Schmutz J."/>
            <person name="Larimer F."/>
            <person name="Land M."/>
            <person name="Hauser L."/>
            <person name="Kyrpides N."/>
            <person name="Kim E."/>
            <person name="Taghavi S."/>
            <person name="Newman L."/>
            <person name="Vangronsveld J."/>
            <person name="van der Lelie D."/>
            <person name="Richardson P."/>
        </authorList>
    </citation>
    <scope>NUCLEOTIDE SEQUENCE [LARGE SCALE GENOMIC DNA]</scope>
    <source>
        <strain>568</strain>
    </source>
</reference>
<organism>
    <name type="scientific">Serratia proteamaculans (strain 568)</name>
    <dbReference type="NCBI Taxonomy" id="399741"/>
    <lineage>
        <taxon>Bacteria</taxon>
        <taxon>Pseudomonadati</taxon>
        <taxon>Pseudomonadota</taxon>
        <taxon>Gammaproteobacteria</taxon>
        <taxon>Enterobacterales</taxon>
        <taxon>Yersiniaceae</taxon>
        <taxon>Serratia</taxon>
    </lineage>
</organism>
<proteinExistence type="inferred from homology"/>
<evidence type="ECO:0000255" key="1">
    <source>
        <dbReference type="HAMAP-Rule" id="MF_01844"/>
    </source>
</evidence>
<evidence type="ECO:0000305" key="2"/>
<sequence>MTNIIRQFLRQEAAGGIILIVAAIIALIMANTPAQGIYHAFLNLPVMVKVSSLEIAKPLLLWINDGLMAIFFLVVGLEVKRELMQGSLAGRDKAVFPAIAALGGMLAPALIYLMFNGADEVTRQGWAIPAATDIAFALGVMALLGNRVPTSLKVFLLALAIIDDLGVIVIIALFYTHEVSMAALGVAAASIAVLAFMNWRGVGKTSLYMIVGLVLWVAILKSGVHATLAGVIIGFMIPLNVKKGPSPSETLEHELHPWVAFLILPLFAFANAGVSLQGVSLSGLTSLLPVGIAAGLFIGKPLGIFTFSLLAVKLGIARLPEGIGFKQVFAVSVLCGIGFTMSIFIASLAFGDADVVLSTYSRLGILIGSTTAAVVGYGLLRMSLPRVR</sequence>
<gene>
    <name evidence="1" type="primary">nhaA</name>
    <name type="ordered locus">Spro_0694</name>
</gene>